<accession>Q8NJQ5</accession>
<name>CHI37_TRIHA</name>
<feature type="signal peptide" evidence="1">
    <location>
        <begin position="1"/>
        <end position="25"/>
    </location>
</feature>
<feature type="chain" id="PRO_0000429894" description="Endochitinase 37">
    <location>
        <begin position="26"/>
        <end position="337"/>
    </location>
</feature>
<feature type="domain" description="GH18" evidence="2">
    <location>
        <begin position="38"/>
        <end position="337"/>
    </location>
</feature>
<feature type="active site" description="Proton donor" evidence="2">
    <location>
        <position position="160"/>
    </location>
</feature>
<feature type="glycosylation site" description="N-linked (GlcNAc...) asparagine" evidence="1">
    <location>
        <position position="331"/>
    </location>
</feature>
<sequence length="337" mass="35478">MTRLLDASFLLLPVIASTLFGTASAQSTCATKGKPAGKVLQGYWENWDGSANGVHPGFGWTPIENPVIAQNGYNVINAAFPVILSDGTALWEDGMDATVKVATPAEMCQAKAAGATILMSIGGATAGIDLSSSTVADKFISTIVPILKQYNFDGIDIDIETGLVGSGSIGTLSTSQANLIRIIDGVLAQMPANFGLTMAPETAYVTGGSVVYGSIWGSYLPIIKKYVDNGRLWWLNMQYYNGDMYGCSGDSYAAGTVQGFTAQTDCLNNGITIQGTTIKVPYNMQVPGLPAQSGAGGGYMTPALVGQAWDHYNGALKGLMTWSINWDGSKNWTFGDN</sequence>
<proteinExistence type="evidence at protein level"/>
<protein>
    <recommendedName>
        <fullName>Endochitinase 37</fullName>
        <ecNumber>3.2.1.14</ecNumber>
    </recommendedName>
    <alternativeName>
        <fullName>37 kDa endochitinase</fullName>
    </alternativeName>
    <alternativeName>
        <fullName>Chitinase 37</fullName>
    </alternativeName>
</protein>
<organism>
    <name type="scientific">Trichoderma harzianum</name>
    <name type="common">Hypocrea lixii</name>
    <dbReference type="NCBI Taxonomy" id="5544"/>
    <lineage>
        <taxon>Eukaryota</taxon>
        <taxon>Fungi</taxon>
        <taxon>Dikarya</taxon>
        <taxon>Ascomycota</taxon>
        <taxon>Pezizomycotina</taxon>
        <taxon>Sordariomycetes</taxon>
        <taxon>Hypocreomycetidae</taxon>
        <taxon>Hypocreales</taxon>
        <taxon>Hypocreaceae</taxon>
        <taxon>Trichoderma</taxon>
    </lineage>
</organism>
<evidence type="ECO:0000255" key="1"/>
<evidence type="ECO:0000255" key="2">
    <source>
        <dbReference type="PROSITE-ProRule" id="PRU01258"/>
    </source>
</evidence>
<evidence type="ECO:0000269" key="3">
    <source>
    </source>
</evidence>
<evidence type="ECO:0000305" key="4"/>
<reference key="1">
    <citation type="submission" date="2002-06" db="EMBL/GenBank/DDBJ databases">
        <title>Expression regulation of the endochitinase chit36 from Trichoderma asperellum (T. harzianum T-203).</title>
        <authorList>
            <person name="Viterbo A."/>
            <person name="Montero M."/>
            <person name="Ramot O."/>
            <person name="Friesem D."/>
            <person name="Monte E."/>
            <person name="Llobell A."/>
            <person name="Chet I."/>
        </authorList>
    </citation>
    <scope>NUCLEOTIDE SEQUENCE [GENOMIC DNA]</scope>
    <source>
        <strain>ATCC 48131 / CBS 354.33 / CECT 2413 / VTT D-80150</strain>
    </source>
</reference>
<reference key="2">
    <citation type="journal article" date="1992" name="Eur. J. Biochem.">
        <title>Isolation and characterization of three chitinases from Trichoderma harzianum.</title>
        <authorList>
            <person name="de la Cruz J."/>
            <person name="Hidalgo-Gallego A."/>
            <person name="Lora J.M."/>
            <person name="Benitez T."/>
            <person name="Pintor-Toro J.A."/>
            <person name="Llobell A."/>
        </authorList>
    </citation>
    <scope>INDUCTION</scope>
    <scope>SUBCELLULAR LOCATION</scope>
    <scope>SUBUNIT</scope>
    <scope>FUNCTION</scope>
    <scope>CATALYTIC ACTIVITY</scope>
    <scope>BIOPHYSICOCHEMICAL PROPERTIES</scope>
</reference>
<comment type="function">
    <text evidence="3">Secreted chitinase involved in the degradation of chitin, a component of the cell walls of fungi and exoskeletal elements of some animals (including worms and arthropods). Plays a morphogenetic role during apical growth, cell division and differentiation (cell wall morphogenesis). May be involved in the degradation and further assimilation of phytopathogenic fungi, namely mycoparasitism, the major mechanism accounting for the antagonistic activity against phytopathogenic fungi displayed by Trichoderma.</text>
</comment>
<comment type="catalytic activity">
    <reaction evidence="3">
        <text>Random endo-hydrolysis of N-acetyl-beta-D-glucosaminide (1-&gt;4)-beta-linkages in chitin and chitodextrins.</text>
        <dbReference type="EC" id="3.2.1.14"/>
    </reaction>
</comment>
<comment type="biophysicochemical properties">
    <kinetics>
        <KM evidence="3">0.5 mg/ml for colloidal chitin</KM>
        <KM evidence="3">0.7 mM for p-nitrophenyl-N-N'-diacetylchitobiose</KM>
    </kinetics>
    <temperatureDependence>
        <text evidence="3">Optimum temperature is 45-50 degrees Celsius.</text>
    </temperatureDependence>
</comment>
<comment type="subunit">
    <text evidence="3">Monomer.</text>
</comment>
<comment type="subcellular location">
    <subcellularLocation>
        <location evidence="3">Secreted</location>
    </subcellularLocation>
</comment>
<comment type="induction">
    <text evidence="3">Specifically induced by chitin.</text>
</comment>
<comment type="biotechnology">
    <text>The antagonistic activity of Trichoderma harzianum is used for the control of several soil borne plant pathogenic fungi.</text>
</comment>
<comment type="similarity">
    <text evidence="4">Belongs to the glycosyl hydrolase 18 family. Chitinase class V subfamily.</text>
</comment>
<dbReference type="EC" id="3.2.1.14"/>
<dbReference type="EMBL" id="AF525753">
    <property type="protein sequence ID" value="AAM93195.1"/>
    <property type="molecule type" value="Genomic_DNA"/>
</dbReference>
<dbReference type="SMR" id="Q8NJQ5"/>
<dbReference type="CAZy" id="GH18">
    <property type="family name" value="Glycoside Hydrolase Family 18"/>
</dbReference>
<dbReference type="GlyCosmos" id="Q8NJQ5">
    <property type="glycosylation" value="1 site, No reported glycans"/>
</dbReference>
<dbReference type="GO" id="GO:0005576">
    <property type="term" value="C:extracellular region"/>
    <property type="evidence" value="ECO:0007669"/>
    <property type="project" value="UniProtKB-SubCell"/>
</dbReference>
<dbReference type="GO" id="GO:0008061">
    <property type="term" value="F:chitin binding"/>
    <property type="evidence" value="ECO:0007669"/>
    <property type="project" value="UniProtKB-KW"/>
</dbReference>
<dbReference type="GO" id="GO:0008843">
    <property type="term" value="F:endochitinase activity"/>
    <property type="evidence" value="ECO:0007669"/>
    <property type="project" value="UniProtKB-EC"/>
</dbReference>
<dbReference type="GO" id="GO:0006032">
    <property type="term" value="P:chitin catabolic process"/>
    <property type="evidence" value="ECO:0007669"/>
    <property type="project" value="UniProtKB-KW"/>
</dbReference>
<dbReference type="GO" id="GO:0000272">
    <property type="term" value="P:polysaccharide catabolic process"/>
    <property type="evidence" value="ECO:0007669"/>
    <property type="project" value="UniProtKB-KW"/>
</dbReference>
<dbReference type="CDD" id="cd02871">
    <property type="entry name" value="GH18_chitinase_D-like"/>
    <property type="match status" value="1"/>
</dbReference>
<dbReference type="Gene3D" id="3.20.20.80">
    <property type="entry name" value="Glycosidases"/>
    <property type="match status" value="1"/>
</dbReference>
<dbReference type="InterPro" id="IPR011583">
    <property type="entry name" value="Chitinase_II/V-like_cat"/>
</dbReference>
<dbReference type="InterPro" id="IPR001223">
    <property type="entry name" value="Glyco_hydro18_cat"/>
</dbReference>
<dbReference type="InterPro" id="IPR001579">
    <property type="entry name" value="Glyco_hydro_18_chit_AS"/>
</dbReference>
<dbReference type="InterPro" id="IPR017853">
    <property type="entry name" value="Glycoside_hydrolase_SF"/>
</dbReference>
<dbReference type="InterPro" id="IPR050542">
    <property type="entry name" value="Glycosyl_Hydrlase18_Chitinase"/>
</dbReference>
<dbReference type="PANTHER" id="PTHR45708">
    <property type="entry name" value="ENDOCHITINASE"/>
    <property type="match status" value="1"/>
</dbReference>
<dbReference type="PANTHER" id="PTHR45708:SF49">
    <property type="entry name" value="ENDOCHITINASE"/>
    <property type="match status" value="1"/>
</dbReference>
<dbReference type="Pfam" id="PF00704">
    <property type="entry name" value="Glyco_hydro_18"/>
    <property type="match status" value="1"/>
</dbReference>
<dbReference type="SMART" id="SM00636">
    <property type="entry name" value="Glyco_18"/>
    <property type="match status" value="1"/>
</dbReference>
<dbReference type="SUPFAM" id="SSF51445">
    <property type="entry name" value="(Trans)glycosidases"/>
    <property type="match status" value="1"/>
</dbReference>
<dbReference type="PROSITE" id="PS01095">
    <property type="entry name" value="GH18_1"/>
    <property type="match status" value="1"/>
</dbReference>
<dbReference type="PROSITE" id="PS51910">
    <property type="entry name" value="GH18_2"/>
    <property type="match status" value="1"/>
</dbReference>
<gene>
    <name type="primary">chit37</name>
</gene>
<keyword id="KW-0119">Carbohydrate metabolism</keyword>
<keyword id="KW-0146">Chitin degradation</keyword>
<keyword id="KW-0147">Chitin-binding</keyword>
<keyword id="KW-0325">Glycoprotein</keyword>
<keyword id="KW-0326">Glycosidase</keyword>
<keyword id="KW-0378">Hydrolase</keyword>
<keyword id="KW-0624">Polysaccharide degradation</keyword>
<keyword id="KW-0964">Secreted</keyword>
<keyword id="KW-0732">Signal</keyword>
<keyword id="KW-0843">Virulence</keyword>